<dbReference type="EMBL" id="AM260525">
    <property type="protein sequence ID" value="CAK01093.1"/>
    <property type="molecule type" value="Genomic_DNA"/>
</dbReference>
<dbReference type="RefSeq" id="WP_012231198.1">
    <property type="nucleotide sequence ID" value="NC_010161.1"/>
</dbReference>
<dbReference type="SMR" id="A9IQR9"/>
<dbReference type="KEGG" id="btr:BT_0659"/>
<dbReference type="eggNOG" id="COG1678">
    <property type="taxonomic scope" value="Bacteria"/>
</dbReference>
<dbReference type="HOGENOM" id="CLU_057596_1_0_5"/>
<dbReference type="Proteomes" id="UP000001592">
    <property type="component" value="Chromosome"/>
</dbReference>
<dbReference type="GO" id="GO:0005829">
    <property type="term" value="C:cytosol"/>
    <property type="evidence" value="ECO:0007669"/>
    <property type="project" value="TreeGrafter"/>
</dbReference>
<dbReference type="Gene3D" id="3.40.1740.10">
    <property type="entry name" value="VC0467-like"/>
    <property type="match status" value="1"/>
</dbReference>
<dbReference type="HAMAP" id="MF_00758">
    <property type="entry name" value="UPF0301"/>
    <property type="match status" value="1"/>
</dbReference>
<dbReference type="InterPro" id="IPR003774">
    <property type="entry name" value="AlgH-like"/>
</dbReference>
<dbReference type="NCBIfam" id="NF001268">
    <property type="entry name" value="PRK00228.1-4"/>
    <property type="match status" value="1"/>
</dbReference>
<dbReference type="PANTHER" id="PTHR30327">
    <property type="entry name" value="UNCHARACTERIZED PROTEIN YQGE"/>
    <property type="match status" value="1"/>
</dbReference>
<dbReference type="PANTHER" id="PTHR30327:SF1">
    <property type="entry name" value="UPF0301 PROTEIN YQGE"/>
    <property type="match status" value="1"/>
</dbReference>
<dbReference type="Pfam" id="PF02622">
    <property type="entry name" value="DUF179"/>
    <property type="match status" value="1"/>
</dbReference>
<dbReference type="SUPFAM" id="SSF143456">
    <property type="entry name" value="VC0467-like"/>
    <property type="match status" value="1"/>
</dbReference>
<gene>
    <name type="ordered locus">BT_0659</name>
</gene>
<name>Y659_BART1</name>
<sequence>MTQCNGFLGGQLLIAMPGMNDKRFMRSVIYICAHSDAGAMGIILNQLHHIDFPELLLHLGVIDSGQKKCLSEPIKQFPVRYGGPVDPSRGFVLHSDDYACEETVFIADKVCFTATIDILKAISCEQGPQHALVALGYAGWKAGQLEAEISTNGWLISSTSPSFLFESDLSCKYDKSLTRMGIDPTYLASEMGHA</sequence>
<feature type="chain" id="PRO_1000083506" description="UPF0301 protein BT_0659">
    <location>
        <begin position="1"/>
        <end position="194"/>
    </location>
</feature>
<evidence type="ECO:0000255" key="1">
    <source>
        <dbReference type="HAMAP-Rule" id="MF_00758"/>
    </source>
</evidence>
<protein>
    <recommendedName>
        <fullName evidence="1">UPF0301 protein BT_0659</fullName>
    </recommendedName>
</protein>
<accession>A9IQR9</accession>
<organism>
    <name type="scientific">Bartonella tribocorum (strain CIP 105476 / IBS 506)</name>
    <dbReference type="NCBI Taxonomy" id="382640"/>
    <lineage>
        <taxon>Bacteria</taxon>
        <taxon>Pseudomonadati</taxon>
        <taxon>Pseudomonadota</taxon>
        <taxon>Alphaproteobacteria</taxon>
        <taxon>Hyphomicrobiales</taxon>
        <taxon>Bartonellaceae</taxon>
        <taxon>Bartonella</taxon>
    </lineage>
</organism>
<proteinExistence type="inferred from homology"/>
<comment type="similarity">
    <text evidence="1">Belongs to the UPF0301 (AlgH) family.</text>
</comment>
<reference key="1">
    <citation type="journal article" date="2007" name="Nat. Genet.">
        <title>Genomic analysis of Bartonella identifies type IV secretion systems as host adaptability factors.</title>
        <authorList>
            <person name="Saenz H.L."/>
            <person name="Engel P."/>
            <person name="Stoeckli M.C."/>
            <person name="Lanz C."/>
            <person name="Raddatz G."/>
            <person name="Vayssier-Taussat M."/>
            <person name="Birtles R."/>
            <person name="Schuster S.C."/>
            <person name="Dehio C."/>
        </authorList>
    </citation>
    <scope>NUCLEOTIDE SEQUENCE [LARGE SCALE GENOMIC DNA]</scope>
    <source>
        <strain>CIP 105476 / IBS 506</strain>
    </source>
</reference>